<gene>
    <name evidence="2" type="primary">PPP1R3C</name>
    <name evidence="2" type="synonym">PPP1R5</name>
</gene>
<organism>
    <name type="scientific">Bos taurus</name>
    <name type="common">Bovine</name>
    <dbReference type="NCBI Taxonomy" id="9913"/>
    <lineage>
        <taxon>Eukaryota</taxon>
        <taxon>Metazoa</taxon>
        <taxon>Chordata</taxon>
        <taxon>Craniata</taxon>
        <taxon>Vertebrata</taxon>
        <taxon>Euteleostomi</taxon>
        <taxon>Mammalia</taxon>
        <taxon>Eutheria</taxon>
        <taxon>Laurasiatheria</taxon>
        <taxon>Artiodactyla</taxon>
        <taxon>Ruminantia</taxon>
        <taxon>Pecora</taxon>
        <taxon>Bovidae</taxon>
        <taxon>Bovinae</taxon>
        <taxon>Bos</taxon>
    </lineage>
</organism>
<accession>Q0VCR4</accession>
<accession>A7E3S7</accession>
<name>PPR3C_BOVIN</name>
<proteinExistence type="evidence at transcript level"/>
<evidence type="ECO:0000250" key="1"/>
<evidence type="ECO:0000250" key="2">
    <source>
        <dbReference type="UniProtKB" id="Q7TMB3"/>
    </source>
</evidence>
<evidence type="ECO:0000250" key="3">
    <source>
        <dbReference type="UniProtKB" id="Q9UQK1"/>
    </source>
</evidence>
<evidence type="ECO:0000255" key="4">
    <source>
        <dbReference type="PROSITE-ProRule" id="PRU00491"/>
    </source>
</evidence>
<evidence type="ECO:0000312" key="5">
    <source>
        <dbReference type="EMBL" id="AAI20043.1"/>
    </source>
</evidence>
<reference key="1">
    <citation type="journal article" date="2005" name="BMC Genomics">
        <title>Characterization of 954 bovine full-CDS cDNA sequences.</title>
        <authorList>
            <person name="Harhay G.P."/>
            <person name="Sonstegard T.S."/>
            <person name="Keele J.W."/>
            <person name="Heaton M.P."/>
            <person name="Clawson M.L."/>
            <person name="Snelling W.M."/>
            <person name="Wiedmann R.T."/>
            <person name="Van Tassell C.P."/>
            <person name="Smith T.P.L."/>
        </authorList>
    </citation>
    <scope>NUCLEOTIDE SEQUENCE [LARGE SCALE MRNA]</scope>
</reference>
<reference evidence="5" key="2">
    <citation type="submission" date="2006-08" db="EMBL/GenBank/DDBJ databases">
        <authorList>
            <consortium name="NIH - Mammalian Gene Collection (MGC) project"/>
        </authorList>
    </citation>
    <scope>NUCLEOTIDE SEQUENCE [LARGE SCALE MRNA]</scope>
    <source>
        <strain evidence="5">Hereford</strain>
        <tissue evidence="5">Fetal pons</tissue>
    </source>
</reference>
<feature type="chain" id="PRO_0000285926" description="Protein phosphatase 1 regulatory subunit 3C">
    <location>
        <begin position="1"/>
        <end position="318"/>
    </location>
</feature>
<feature type="domain" description="CBM21" evidence="4">
    <location>
        <begin position="149"/>
        <end position="257"/>
    </location>
</feature>
<feature type="region of interest" description="Interaction with EPM2A" evidence="3">
    <location>
        <begin position="141"/>
        <end position="263"/>
    </location>
</feature>
<feature type="short sequence motif" description="PP1-binding motif">
    <location>
        <begin position="84"/>
        <end position="87"/>
    </location>
</feature>
<dbReference type="EMBL" id="BT030698">
    <property type="protein sequence ID" value="ABS45014.1"/>
    <property type="molecule type" value="mRNA"/>
</dbReference>
<dbReference type="EMBL" id="BC120042">
    <property type="protein sequence ID" value="AAI20043.1"/>
    <property type="molecule type" value="mRNA"/>
</dbReference>
<dbReference type="RefSeq" id="NP_001069632.1">
    <property type="nucleotide sequence ID" value="NM_001076164.2"/>
</dbReference>
<dbReference type="SMR" id="Q0VCR4"/>
<dbReference type="FunCoup" id="Q0VCR4">
    <property type="interactions" value="31"/>
</dbReference>
<dbReference type="STRING" id="9913.ENSBTAP00000019753"/>
<dbReference type="CAZy" id="CBM21">
    <property type="family name" value="Carbohydrate-Binding Module Family 21"/>
</dbReference>
<dbReference type="PaxDb" id="9913-ENSBTAP00000019753"/>
<dbReference type="Ensembl" id="ENSBTAT00000019753.5">
    <property type="protein sequence ID" value="ENSBTAP00000019753.3"/>
    <property type="gene ID" value="ENSBTAG00000014831.5"/>
</dbReference>
<dbReference type="GeneID" id="539466"/>
<dbReference type="KEGG" id="bta:539466"/>
<dbReference type="CTD" id="5507"/>
<dbReference type="VEuPathDB" id="HostDB:ENSBTAG00000014831"/>
<dbReference type="VGNC" id="VGNC:33244">
    <property type="gene designation" value="PPP1R3C"/>
</dbReference>
<dbReference type="eggNOG" id="KOG3986">
    <property type="taxonomic scope" value="Eukaryota"/>
</dbReference>
<dbReference type="GeneTree" id="ENSGT00940000155648"/>
<dbReference type="HOGENOM" id="CLU_040215_2_1_1"/>
<dbReference type="InParanoid" id="Q0VCR4"/>
<dbReference type="OMA" id="FCISYQS"/>
<dbReference type="OrthoDB" id="8942186at2759"/>
<dbReference type="TreeFam" id="TF105537"/>
<dbReference type="Reactome" id="R-BTA-3322077">
    <property type="pathway name" value="Glycogen synthesis"/>
</dbReference>
<dbReference type="Proteomes" id="UP000009136">
    <property type="component" value="Chromosome 26"/>
</dbReference>
<dbReference type="Bgee" id="ENSBTAG00000014831">
    <property type="expression patterns" value="Expressed in cardiac ventricle and 104 other cell types or tissues"/>
</dbReference>
<dbReference type="GO" id="GO:0005829">
    <property type="term" value="C:cytosol"/>
    <property type="evidence" value="ECO:0007669"/>
    <property type="project" value="Ensembl"/>
</dbReference>
<dbReference type="GO" id="GO:0000164">
    <property type="term" value="C:protein phosphatase type 1 complex"/>
    <property type="evidence" value="ECO:0000318"/>
    <property type="project" value="GO_Central"/>
</dbReference>
<dbReference type="GO" id="GO:2001069">
    <property type="term" value="F:glycogen binding"/>
    <property type="evidence" value="ECO:0000318"/>
    <property type="project" value="GO_Central"/>
</dbReference>
<dbReference type="GO" id="GO:0060090">
    <property type="term" value="F:molecular adaptor activity"/>
    <property type="evidence" value="ECO:0007669"/>
    <property type="project" value="Ensembl"/>
</dbReference>
<dbReference type="GO" id="GO:0008157">
    <property type="term" value="F:protein phosphatase 1 binding"/>
    <property type="evidence" value="ECO:0000318"/>
    <property type="project" value="GO_Central"/>
</dbReference>
<dbReference type="GO" id="GO:0019903">
    <property type="term" value="F:protein phosphatase binding"/>
    <property type="evidence" value="ECO:0000250"/>
    <property type="project" value="UniProtKB"/>
</dbReference>
<dbReference type="GO" id="GO:0005978">
    <property type="term" value="P:glycogen biosynthetic process"/>
    <property type="evidence" value="ECO:0000250"/>
    <property type="project" value="UniProtKB"/>
</dbReference>
<dbReference type="GO" id="GO:0005977">
    <property type="term" value="P:glycogen metabolic process"/>
    <property type="evidence" value="ECO:0000250"/>
    <property type="project" value="UniProtKB"/>
</dbReference>
<dbReference type="GO" id="GO:0005979">
    <property type="term" value="P:regulation of glycogen biosynthetic process"/>
    <property type="evidence" value="ECO:0000318"/>
    <property type="project" value="GO_Central"/>
</dbReference>
<dbReference type="CDD" id="cd22815">
    <property type="entry name" value="PBD_PPP1R3C"/>
    <property type="match status" value="1"/>
</dbReference>
<dbReference type="FunFam" id="2.60.40.2440:FF:000001">
    <property type="entry name" value="Protein phosphatase 1 regulatory subunit 3C"/>
    <property type="match status" value="1"/>
</dbReference>
<dbReference type="Gene3D" id="2.60.40.2440">
    <property type="entry name" value="Carbohydrate binding type-21 domain"/>
    <property type="match status" value="1"/>
</dbReference>
<dbReference type="InterPro" id="IPR005036">
    <property type="entry name" value="CBM21_dom"/>
</dbReference>
<dbReference type="InterPro" id="IPR038175">
    <property type="entry name" value="CBM21_dom_sf"/>
</dbReference>
<dbReference type="InterPro" id="IPR017434">
    <property type="entry name" value="Pase-1_reg-su_3B/C/D_met"/>
</dbReference>
<dbReference type="InterPro" id="IPR030683">
    <property type="entry name" value="PP1_3C"/>
</dbReference>
<dbReference type="InterPro" id="IPR050782">
    <property type="entry name" value="PP1_regulatory_subunit_3"/>
</dbReference>
<dbReference type="PANTHER" id="PTHR12307">
    <property type="entry name" value="PROTEIN PHOSPHATASE 1 REGULATORY SUBUNIT"/>
    <property type="match status" value="1"/>
</dbReference>
<dbReference type="PANTHER" id="PTHR12307:SF15">
    <property type="entry name" value="PROTEIN PHOSPHATASE 1 REGULATORY SUBUNIT 3C"/>
    <property type="match status" value="1"/>
</dbReference>
<dbReference type="Pfam" id="PF03370">
    <property type="entry name" value="CBM_21"/>
    <property type="match status" value="1"/>
</dbReference>
<dbReference type="PIRSF" id="PIRSF038207">
    <property type="entry name" value="PP1_GT_animal"/>
    <property type="match status" value="1"/>
</dbReference>
<dbReference type="PIRSF" id="PIRSF500813">
    <property type="entry name" value="PP1_PTG"/>
    <property type="match status" value="1"/>
</dbReference>
<dbReference type="PROSITE" id="PS51159">
    <property type="entry name" value="CBM21"/>
    <property type="match status" value="1"/>
</dbReference>
<sequence>MSCTRMIQVLDPRPLTSSVMPVDVAVRLCLAHSPPLKSFLSPYDDFQRRNFVNKLKPLKSCLNIKQEARAQDDWKPSHNQAKKRVVFADSKGLSLTAIHVFSDLPEEPVWDLQFDLLDLNDISSGLKLHEEKNLILDFPQPSADYLSFRNHFQKNSVCLENCSLQERTVTGTVKVKNMSFEKKVQIRITFDSWQSYNDVDCAYMKNVYGGSESDTFSFAIDLPSVIPTKEKIEFCVAYHANGQVFWDNNEGQNYRIVHVQWKPDGVQTQMAAQDCAFHQAPPPKAELESTVFGSPRLASGLFPEWQSWGRMENLASYR</sequence>
<comment type="function">
    <text evidence="2">Acts as a glycogen-targeting subunit for PP1 and regulates its activity. Activates glycogen synthase, reduces glycogen phosphorylase activity and limits glycogen breakdown. Dramatically increases basal and insulin-stimulated glycogen synthesis upon overexpression in a variety of cell types (By similarity).</text>
</comment>
<comment type="subunit">
    <text evidence="2 3">Interacts with PPP1CC catalytic subunit of PP1 and associates with glycogen. Forms complexes with glycogen phosphorylase, glycogen synthase and phosphorylase kinase which is necessary for its regulation of PP1 activity. Also interacts with EPM2A/laforin (By similarity).</text>
</comment>
<comment type="domain">
    <text evidence="2">The N-terminal region is required for binding to PP1, the central region is required for binding to glycogen and the C-terminal region is required for binding to glycogen phosphorylase, glycogen synthase and phosphorylase kinase.</text>
</comment>
<comment type="PTM">
    <text evidence="1">Ubiquitinated by NHLRC1/malin in a EPM2A/laforin-dependent manner.</text>
</comment>
<protein>
    <recommendedName>
        <fullName>Protein phosphatase 1 regulatory subunit 3C</fullName>
    </recommendedName>
    <alternativeName>
        <fullName>Protein phosphatase 1 regulatory subunit 5</fullName>
        <shortName>PP1 subunit R5</shortName>
    </alternativeName>
    <alternativeName>
        <fullName>Protein targeting to glycogen</fullName>
        <shortName>PTG</shortName>
    </alternativeName>
</protein>
<keyword id="KW-0119">Carbohydrate metabolism</keyword>
<keyword id="KW-0321">Glycogen metabolism</keyword>
<keyword id="KW-1185">Reference proteome</keyword>
<keyword id="KW-0832">Ubl conjugation</keyword>